<reference key="1">
    <citation type="journal article" date="2005" name="Science">
        <title>The transcriptional landscape of the mammalian genome.</title>
        <authorList>
            <person name="Carninci P."/>
            <person name="Kasukawa T."/>
            <person name="Katayama S."/>
            <person name="Gough J."/>
            <person name="Frith M.C."/>
            <person name="Maeda N."/>
            <person name="Oyama R."/>
            <person name="Ravasi T."/>
            <person name="Lenhard B."/>
            <person name="Wells C."/>
            <person name="Kodzius R."/>
            <person name="Shimokawa K."/>
            <person name="Bajic V.B."/>
            <person name="Brenner S.E."/>
            <person name="Batalov S."/>
            <person name="Forrest A.R."/>
            <person name="Zavolan M."/>
            <person name="Davis M.J."/>
            <person name="Wilming L.G."/>
            <person name="Aidinis V."/>
            <person name="Allen J.E."/>
            <person name="Ambesi-Impiombato A."/>
            <person name="Apweiler R."/>
            <person name="Aturaliya R.N."/>
            <person name="Bailey T.L."/>
            <person name="Bansal M."/>
            <person name="Baxter L."/>
            <person name="Beisel K.W."/>
            <person name="Bersano T."/>
            <person name="Bono H."/>
            <person name="Chalk A.M."/>
            <person name="Chiu K.P."/>
            <person name="Choudhary V."/>
            <person name="Christoffels A."/>
            <person name="Clutterbuck D.R."/>
            <person name="Crowe M.L."/>
            <person name="Dalla E."/>
            <person name="Dalrymple B.P."/>
            <person name="de Bono B."/>
            <person name="Della Gatta G."/>
            <person name="di Bernardo D."/>
            <person name="Down T."/>
            <person name="Engstrom P."/>
            <person name="Fagiolini M."/>
            <person name="Faulkner G."/>
            <person name="Fletcher C.F."/>
            <person name="Fukushima T."/>
            <person name="Furuno M."/>
            <person name="Futaki S."/>
            <person name="Gariboldi M."/>
            <person name="Georgii-Hemming P."/>
            <person name="Gingeras T.R."/>
            <person name="Gojobori T."/>
            <person name="Green R.E."/>
            <person name="Gustincich S."/>
            <person name="Harbers M."/>
            <person name="Hayashi Y."/>
            <person name="Hensch T.K."/>
            <person name="Hirokawa N."/>
            <person name="Hill D."/>
            <person name="Huminiecki L."/>
            <person name="Iacono M."/>
            <person name="Ikeo K."/>
            <person name="Iwama A."/>
            <person name="Ishikawa T."/>
            <person name="Jakt M."/>
            <person name="Kanapin A."/>
            <person name="Katoh M."/>
            <person name="Kawasawa Y."/>
            <person name="Kelso J."/>
            <person name="Kitamura H."/>
            <person name="Kitano H."/>
            <person name="Kollias G."/>
            <person name="Krishnan S.P."/>
            <person name="Kruger A."/>
            <person name="Kummerfeld S.K."/>
            <person name="Kurochkin I.V."/>
            <person name="Lareau L.F."/>
            <person name="Lazarevic D."/>
            <person name="Lipovich L."/>
            <person name="Liu J."/>
            <person name="Liuni S."/>
            <person name="McWilliam S."/>
            <person name="Madan Babu M."/>
            <person name="Madera M."/>
            <person name="Marchionni L."/>
            <person name="Matsuda H."/>
            <person name="Matsuzawa S."/>
            <person name="Miki H."/>
            <person name="Mignone F."/>
            <person name="Miyake S."/>
            <person name="Morris K."/>
            <person name="Mottagui-Tabar S."/>
            <person name="Mulder N."/>
            <person name="Nakano N."/>
            <person name="Nakauchi H."/>
            <person name="Ng P."/>
            <person name="Nilsson R."/>
            <person name="Nishiguchi S."/>
            <person name="Nishikawa S."/>
            <person name="Nori F."/>
            <person name="Ohara O."/>
            <person name="Okazaki Y."/>
            <person name="Orlando V."/>
            <person name="Pang K.C."/>
            <person name="Pavan W.J."/>
            <person name="Pavesi G."/>
            <person name="Pesole G."/>
            <person name="Petrovsky N."/>
            <person name="Piazza S."/>
            <person name="Reed J."/>
            <person name="Reid J.F."/>
            <person name="Ring B.Z."/>
            <person name="Ringwald M."/>
            <person name="Rost B."/>
            <person name="Ruan Y."/>
            <person name="Salzberg S.L."/>
            <person name="Sandelin A."/>
            <person name="Schneider C."/>
            <person name="Schoenbach C."/>
            <person name="Sekiguchi K."/>
            <person name="Semple C.A."/>
            <person name="Seno S."/>
            <person name="Sessa L."/>
            <person name="Sheng Y."/>
            <person name="Shibata Y."/>
            <person name="Shimada H."/>
            <person name="Shimada K."/>
            <person name="Silva D."/>
            <person name="Sinclair B."/>
            <person name="Sperling S."/>
            <person name="Stupka E."/>
            <person name="Sugiura K."/>
            <person name="Sultana R."/>
            <person name="Takenaka Y."/>
            <person name="Taki K."/>
            <person name="Tammoja K."/>
            <person name="Tan S.L."/>
            <person name="Tang S."/>
            <person name="Taylor M.S."/>
            <person name="Tegner J."/>
            <person name="Teichmann S.A."/>
            <person name="Ueda H.R."/>
            <person name="van Nimwegen E."/>
            <person name="Verardo R."/>
            <person name="Wei C.L."/>
            <person name="Yagi K."/>
            <person name="Yamanishi H."/>
            <person name="Zabarovsky E."/>
            <person name="Zhu S."/>
            <person name="Zimmer A."/>
            <person name="Hide W."/>
            <person name="Bult C."/>
            <person name="Grimmond S.M."/>
            <person name="Teasdale R.D."/>
            <person name="Liu E.T."/>
            <person name="Brusic V."/>
            <person name="Quackenbush J."/>
            <person name="Wahlestedt C."/>
            <person name="Mattick J.S."/>
            <person name="Hume D.A."/>
            <person name="Kai C."/>
            <person name="Sasaki D."/>
            <person name="Tomaru Y."/>
            <person name="Fukuda S."/>
            <person name="Kanamori-Katayama M."/>
            <person name="Suzuki M."/>
            <person name="Aoki J."/>
            <person name="Arakawa T."/>
            <person name="Iida J."/>
            <person name="Imamura K."/>
            <person name="Itoh M."/>
            <person name="Kato T."/>
            <person name="Kawaji H."/>
            <person name="Kawagashira N."/>
            <person name="Kawashima T."/>
            <person name="Kojima M."/>
            <person name="Kondo S."/>
            <person name="Konno H."/>
            <person name="Nakano K."/>
            <person name="Ninomiya N."/>
            <person name="Nishio T."/>
            <person name="Okada M."/>
            <person name="Plessy C."/>
            <person name="Shibata K."/>
            <person name="Shiraki T."/>
            <person name="Suzuki S."/>
            <person name="Tagami M."/>
            <person name="Waki K."/>
            <person name="Watahiki A."/>
            <person name="Okamura-Oho Y."/>
            <person name="Suzuki H."/>
            <person name="Kawai J."/>
            <person name="Hayashizaki Y."/>
        </authorList>
    </citation>
    <scope>NUCLEOTIDE SEQUENCE [LARGE SCALE MRNA]</scope>
    <source>
        <strain>NOD</strain>
    </source>
</reference>
<feature type="chain" id="PRO_0000234015" description="Zinc finger protein 692">
    <location>
        <begin position="1"/>
        <end position="531"/>
    </location>
</feature>
<feature type="zinc finger region" description="C2H2-type 1" evidence="2">
    <location>
        <begin position="327"/>
        <end position="352"/>
    </location>
</feature>
<feature type="zinc finger region" description="C2H2-type 2" evidence="2">
    <location>
        <begin position="358"/>
        <end position="382"/>
    </location>
</feature>
<feature type="zinc finger region" description="C2H2-type 3" evidence="2">
    <location>
        <begin position="388"/>
        <end position="410"/>
    </location>
</feature>
<feature type="zinc finger region" description="C2H2-type 4" evidence="2">
    <location>
        <begin position="416"/>
        <end position="438"/>
    </location>
</feature>
<feature type="zinc finger region" description="C2H2-type 5" evidence="2">
    <location>
        <begin position="447"/>
        <end position="470"/>
    </location>
</feature>
<feature type="region of interest" description="Disordered" evidence="3">
    <location>
        <begin position="155"/>
        <end position="249"/>
    </location>
</feature>
<feature type="region of interest" description="Disordered" evidence="3">
    <location>
        <begin position="287"/>
        <end position="307"/>
    </location>
</feature>
<feature type="region of interest" description="Disordered" evidence="3">
    <location>
        <begin position="474"/>
        <end position="531"/>
    </location>
</feature>
<feature type="compositionally biased region" description="Basic and acidic residues" evidence="3">
    <location>
        <begin position="155"/>
        <end position="178"/>
    </location>
</feature>
<feature type="compositionally biased region" description="Acidic residues" evidence="3">
    <location>
        <begin position="186"/>
        <end position="206"/>
    </location>
</feature>
<feature type="compositionally biased region" description="Polar residues" evidence="3">
    <location>
        <begin position="290"/>
        <end position="303"/>
    </location>
</feature>
<feature type="compositionally biased region" description="Polar residues" evidence="3">
    <location>
        <begin position="483"/>
        <end position="499"/>
    </location>
</feature>
<feature type="compositionally biased region" description="Low complexity" evidence="3">
    <location>
        <begin position="502"/>
        <end position="520"/>
    </location>
</feature>
<feature type="modified residue" description="Phosphoserine" evidence="1">
    <location>
        <position position="231"/>
    </location>
</feature>
<feature type="modified residue" description="Phosphoserine" evidence="1">
    <location>
        <position position="469"/>
    </location>
</feature>
<proteinExistence type="evidence at transcript level"/>
<comment type="function">
    <text evidence="1">May act as an transcriptional repressor for PCK1 gene expression, in turn may participate in the hepatic gluconeogenesis regulation through the activated AMPK signaling pathway.</text>
</comment>
<comment type="subcellular location">
    <subcellularLocation>
        <location evidence="1">Nucleus</location>
    </subcellularLocation>
</comment>
<comment type="PTM">
    <text evidence="1">Phosphorylation at Ser-469 results in loss of DNA-binding activity.</text>
</comment>
<comment type="similarity">
    <text evidence="4">Belongs to the krueppel C2H2-type zinc-finger protein family.</text>
</comment>
<name>ZN692_MOUSE</name>
<protein>
    <recommendedName>
        <fullName evidence="4">Zinc finger protein 692</fullName>
    </recommendedName>
    <alternativeName>
        <fullName evidence="1">AICAR responsive element binding protein</fullName>
    </alternativeName>
</protein>
<keyword id="KW-0238">DNA-binding</keyword>
<keyword id="KW-0479">Metal-binding</keyword>
<keyword id="KW-0539">Nucleus</keyword>
<keyword id="KW-0597">Phosphoprotein</keyword>
<keyword id="KW-1185">Reference proteome</keyword>
<keyword id="KW-0677">Repeat</keyword>
<keyword id="KW-0804">Transcription</keyword>
<keyword id="KW-0805">Transcription regulation</keyword>
<keyword id="KW-0862">Zinc</keyword>
<keyword id="KW-0863">Zinc-finger</keyword>
<accession>Q3U381</accession>
<dbReference type="EMBL" id="AK154896">
    <property type="protein sequence ID" value="BAE32908.1"/>
    <property type="molecule type" value="mRNA"/>
</dbReference>
<dbReference type="CCDS" id="CCDS36162.1"/>
<dbReference type="RefSeq" id="NP_001035776.1">
    <property type="nucleotide sequence ID" value="NM_001040686.1"/>
</dbReference>
<dbReference type="RefSeq" id="NP_892041.2">
    <property type="nucleotide sequence ID" value="NM_182996.3"/>
</dbReference>
<dbReference type="SMR" id="Q3U381"/>
<dbReference type="FunCoup" id="Q3U381">
    <property type="interactions" value="1187"/>
</dbReference>
<dbReference type="STRING" id="10090.ENSMUSP00000126674"/>
<dbReference type="iPTMnet" id="Q3U381"/>
<dbReference type="PhosphoSitePlus" id="Q3U381"/>
<dbReference type="PaxDb" id="10090-ENSMUSP00000131896"/>
<dbReference type="ProteomicsDB" id="302094"/>
<dbReference type="Antibodypedia" id="54395">
    <property type="antibodies" value="40 antibodies from 14 providers"/>
</dbReference>
<dbReference type="Ensembl" id="ENSMUST00000049353.9">
    <property type="protein sequence ID" value="ENSMUSP00000131896.2"/>
    <property type="gene ID" value="ENSMUSG00000037243.18"/>
</dbReference>
<dbReference type="Ensembl" id="ENSMUST00000153510.9">
    <property type="protein sequence ID" value="ENSMUSP00000126674.2"/>
    <property type="gene ID" value="ENSMUSG00000037243.18"/>
</dbReference>
<dbReference type="GeneID" id="103836"/>
<dbReference type="KEGG" id="mmu:103836"/>
<dbReference type="UCSC" id="uc007jaw.1">
    <property type="organism name" value="mouse"/>
</dbReference>
<dbReference type="AGR" id="MGI:2144276"/>
<dbReference type="CTD" id="103836"/>
<dbReference type="MGI" id="MGI:2144276">
    <property type="gene designation" value="Zfp692"/>
</dbReference>
<dbReference type="VEuPathDB" id="HostDB:ENSMUSG00000037243"/>
<dbReference type="eggNOG" id="KOG1721">
    <property type="taxonomic scope" value="Eukaryota"/>
</dbReference>
<dbReference type="GeneTree" id="ENSGT00940000161175"/>
<dbReference type="HOGENOM" id="CLU_045687_1_0_1"/>
<dbReference type="InParanoid" id="Q3U381"/>
<dbReference type="OMA" id="MVWECLA"/>
<dbReference type="OrthoDB" id="8685330at2759"/>
<dbReference type="PhylomeDB" id="Q3U381"/>
<dbReference type="TreeFam" id="TF332664"/>
<dbReference type="BioGRID-ORCS" id="103836">
    <property type="hits" value="1 hit in 79 CRISPR screens"/>
</dbReference>
<dbReference type="ChiTaRS" id="Zfp692">
    <property type="organism name" value="mouse"/>
</dbReference>
<dbReference type="PRO" id="PR:Q3U381"/>
<dbReference type="Proteomes" id="UP000000589">
    <property type="component" value="Chromosome 11"/>
</dbReference>
<dbReference type="RNAct" id="Q3U381">
    <property type="molecule type" value="protein"/>
</dbReference>
<dbReference type="Bgee" id="ENSMUSG00000037243">
    <property type="expression patterns" value="Expressed in retinal neural layer and 244 other cell types or tissues"/>
</dbReference>
<dbReference type="GO" id="GO:0005730">
    <property type="term" value="C:nucleolus"/>
    <property type="evidence" value="ECO:0007669"/>
    <property type="project" value="Ensembl"/>
</dbReference>
<dbReference type="GO" id="GO:0005654">
    <property type="term" value="C:nucleoplasm"/>
    <property type="evidence" value="ECO:0007669"/>
    <property type="project" value="Ensembl"/>
</dbReference>
<dbReference type="GO" id="GO:0001227">
    <property type="term" value="F:DNA-binding transcription repressor activity, RNA polymerase II-specific"/>
    <property type="evidence" value="ECO:0007669"/>
    <property type="project" value="Ensembl"/>
</dbReference>
<dbReference type="GO" id="GO:0000978">
    <property type="term" value="F:RNA polymerase II cis-regulatory region sequence-specific DNA binding"/>
    <property type="evidence" value="ECO:0007669"/>
    <property type="project" value="Ensembl"/>
</dbReference>
<dbReference type="GO" id="GO:0008270">
    <property type="term" value="F:zinc ion binding"/>
    <property type="evidence" value="ECO:0007669"/>
    <property type="project" value="UniProtKB-KW"/>
</dbReference>
<dbReference type="GO" id="GO:0006111">
    <property type="term" value="P:regulation of gluconeogenesis"/>
    <property type="evidence" value="ECO:0000250"/>
    <property type="project" value="UniProtKB"/>
</dbReference>
<dbReference type="FunFam" id="3.30.160.60:FF:000183">
    <property type="entry name" value="E3 ubiquitin-protein ligase ZFP91"/>
    <property type="match status" value="1"/>
</dbReference>
<dbReference type="FunFam" id="3.30.160.60:FF:000511">
    <property type="entry name" value="zinc finger protein 692 isoform X2"/>
    <property type="match status" value="1"/>
</dbReference>
<dbReference type="FunFam" id="3.30.160.60:FF:000577">
    <property type="entry name" value="zinc finger protein 692 isoform X2"/>
    <property type="match status" value="1"/>
</dbReference>
<dbReference type="FunFam" id="3.30.160.60:FF:000598">
    <property type="entry name" value="zinc finger protein 692 isoform X2"/>
    <property type="match status" value="1"/>
</dbReference>
<dbReference type="Gene3D" id="3.30.160.60">
    <property type="entry name" value="Classic Zinc Finger"/>
    <property type="match status" value="5"/>
</dbReference>
<dbReference type="InterPro" id="IPR036236">
    <property type="entry name" value="Znf_C2H2_sf"/>
</dbReference>
<dbReference type="InterPro" id="IPR013087">
    <property type="entry name" value="Znf_C2H2_type"/>
</dbReference>
<dbReference type="InterPro" id="IPR050457">
    <property type="entry name" value="ZnFinger_BTB_dom_contain"/>
</dbReference>
<dbReference type="PANTHER" id="PTHR46105">
    <property type="entry name" value="AGAP004733-PA"/>
    <property type="match status" value="1"/>
</dbReference>
<dbReference type="PANTHER" id="PTHR46105:SF5">
    <property type="entry name" value="ZINC FINGER AND BTB DOMAIN-CONTAINING PROTEIN 44 ISOFORM X1"/>
    <property type="match status" value="1"/>
</dbReference>
<dbReference type="Pfam" id="PF00096">
    <property type="entry name" value="zf-C2H2"/>
    <property type="match status" value="2"/>
</dbReference>
<dbReference type="SMART" id="SM00355">
    <property type="entry name" value="ZnF_C2H2"/>
    <property type="match status" value="5"/>
</dbReference>
<dbReference type="SUPFAM" id="SSF57667">
    <property type="entry name" value="beta-beta-alpha zinc fingers"/>
    <property type="match status" value="3"/>
</dbReference>
<dbReference type="PROSITE" id="PS00028">
    <property type="entry name" value="ZINC_FINGER_C2H2_1"/>
    <property type="match status" value="5"/>
</dbReference>
<dbReference type="PROSITE" id="PS50157">
    <property type="entry name" value="ZINC_FINGER_C2H2_2"/>
    <property type="match status" value="5"/>
</dbReference>
<evidence type="ECO:0000250" key="1">
    <source>
        <dbReference type="UniProtKB" id="Q9BU19"/>
    </source>
</evidence>
<evidence type="ECO:0000255" key="2">
    <source>
        <dbReference type="PROSITE-ProRule" id="PRU00042"/>
    </source>
</evidence>
<evidence type="ECO:0000256" key="3">
    <source>
        <dbReference type="SAM" id="MobiDB-lite"/>
    </source>
</evidence>
<evidence type="ECO:0000305" key="4"/>
<evidence type="ECO:0000312" key="5">
    <source>
        <dbReference type="MGI" id="MGI:2144276"/>
    </source>
</evidence>
<gene>
    <name evidence="1" type="primary">Znf692</name>
    <name evidence="1" type="synonym">AREBP</name>
    <name evidence="5" type="synonym">Zfp692</name>
</gene>
<organism>
    <name type="scientific">Mus musculus</name>
    <name type="common">Mouse</name>
    <dbReference type="NCBI Taxonomy" id="10090"/>
    <lineage>
        <taxon>Eukaryota</taxon>
        <taxon>Metazoa</taxon>
        <taxon>Chordata</taxon>
        <taxon>Craniata</taxon>
        <taxon>Vertebrata</taxon>
        <taxon>Euteleostomi</taxon>
        <taxon>Mammalia</taxon>
        <taxon>Eutheria</taxon>
        <taxon>Euarchontoglires</taxon>
        <taxon>Glires</taxon>
        <taxon>Rodentia</taxon>
        <taxon>Myomorpha</taxon>
        <taxon>Muroidea</taxon>
        <taxon>Muridae</taxon>
        <taxon>Murinae</taxon>
        <taxon>Mus</taxon>
        <taxon>Mus</taxon>
    </lineage>
</organism>
<sequence>MASPVADASRRRREKRRQLDARRSKCRIRLGGHMEQWCLLKERLGFSLHSQLAKFLLDRYTSSGCVLCAAPEPGPRKGLQYLVLLSHTHSRECGLVPGLRGPGGGEGELVWECSAGHTFSWEPSLIPAPSDVPKQAPLTHTTERAWCSEARRKQEAQGLECEQRERTQETRLSRRVDSPLEIDPPLGEDQDVEEEEEEEEEEEELLSDASPWTYSSSPDDSEPDVPRPPPSPVTHTPKEGEVSPVPATLPTPCAVLASVGSPDALTSDTEVRLELSRTPQVPAELHMTESLESPGSQAQSAPNPTWDEDTAQIGLRRIRKAAKRELMPCDFPGCGRIFSNRQYLNHHKKYQHIHQKSFCCPEPACGKSFNFKKHLKEHVKLHSDTRDYICEFCARSFRTSSNLVIHRRIHTGEKPLQCEICGFTCRQKASLNWHRRKHAETAAALRFPCEFCGKRFEKPDSVVAHCSKSHPALLPAQEPPGSLVSSPSISAPESLQSPEGASISTTSDSNPASSTSISSPGVPDPRNREKS</sequence>